<feature type="chain" id="PRO_0000243367" description="Dephospho-CoA kinase">
    <location>
        <begin position="1"/>
        <end position="202"/>
    </location>
</feature>
<feature type="domain" description="DPCK" evidence="1">
    <location>
        <begin position="5"/>
        <end position="202"/>
    </location>
</feature>
<feature type="binding site" evidence="1">
    <location>
        <begin position="13"/>
        <end position="18"/>
    </location>
    <ligand>
        <name>ATP</name>
        <dbReference type="ChEBI" id="CHEBI:30616"/>
    </ligand>
</feature>
<gene>
    <name evidence="1" type="primary">coaE</name>
    <name type="ordered locus">XOO1465</name>
</gene>
<reference key="1">
    <citation type="journal article" date="2005" name="Jpn. Agric. Res. Q.">
        <title>Genome sequence of Xanthomonas oryzae pv. oryzae suggests contribution of large numbers of effector genes and insertion sequences to its race diversity.</title>
        <authorList>
            <person name="Ochiai H."/>
            <person name="Inoue Y."/>
            <person name="Takeya M."/>
            <person name="Sasaki A."/>
            <person name="Kaku H."/>
        </authorList>
    </citation>
    <scope>NUCLEOTIDE SEQUENCE [LARGE SCALE GENOMIC DNA]</scope>
    <source>
        <strain>MAFF 311018</strain>
    </source>
</reference>
<dbReference type="EC" id="2.7.1.24" evidence="1"/>
<dbReference type="EMBL" id="AP008229">
    <property type="protein sequence ID" value="BAE68220.1"/>
    <property type="molecule type" value="Genomic_DNA"/>
</dbReference>
<dbReference type="RefSeq" id="WP_011258357.1">
    <property type="nucleotide sequence ID" value="NC_007705.1"/>
</dbReference>
<dbReference type="SMR" id="Q2P5F7"/>
<dbReference type="KEGG" id="xom:XOO1465"/>
<dbReference type="HOGENOM" id="CLU_057180_1_2_6"/>
<dbReference type="UniPathway" id="UPA00241">
    <property type="reaction ID" value="UER00356"/>
</dbReference>
<dbReference type="GO" id="GO:0005737">
    <property type="term" value="C:cytoplasm"/>
    <property type="evidence" value="ECO:0007669"/>
    <property type="project" value="UniProtKB-SubCell"/>
</dbReference>
<dbReference type="GO" id="GO:0005524">
    <property type="term" value="F:ATP binding"/>
    <property type="evidence" value="ECO:0007669"/>
    <property type="project" value="UniProtKB-UniRule"/>
</dbReference>
<dbReference type="GO" id="GO:0004140">
    <property type="term" value="F:dephospho-CoA kinase activity"/>
    <property type="evidence" value="ECO:0007669"/>
    <property type="project" value="UniProtKB-UniRule"/>
</dbReference>
<dbReference type="GO" id="GO:0015937">
    <property type="term" value="P:coenzyme A biosynthetic process"/>
    <property type="evidence" value="ECO:0007669"/>
    <property type="project" value="UniProtKB-UniRule"/>
</dbReference>
<dbReference type="CDD" id="cd02022">
    <property type="entry name" value="DPCK"/>
    <property type="match status" value="1"/>
</dbReference>
<dbReference type="Gene3D" id="3.40.50.300">
    <property type="entry name" value="P-loop containing nucleotide triphosphate hydrolases"/>
    <property type="match status" value="1"/>
</dbReference>
<dbReference type="HAMAP" id="MF_00376">
    <property type="entry name" value="Dephospho_CoA_kinase"/>
    <property type="match status" value="1"/>
</dbReference>
<dbReference type="InterPro" id="IPR001977">
    <property type="entry name" value="Depp_CoAkinase"/>
</dbReference>
<dbReference type="InterPro" id="IPR027417">
    <property type="entry name" value="P-loop_NTPase"/>
</dbReference>
<dbReference type="NCBIfam" id="TIGR00152">
    <property type="entry name" value="dephospho-CoA kinase"/>
    <property type="match status" value="1"/>
</dbReference>
<dbReference type="PANTHER" id="PTHR10695:SF46">
    <property type="entry name" value="BIFUNCTIONAL COENZYME A SYNTHASE-RELATED"/>
    <property type="match status" value="1"/>
</dbReference>
<dbReference type="PANTHER" id="PTHR10695">
    <property type="entry name" value="DEPHOSPHO-COA KINASE-RELATED"/>
    <property type="match status" value="1"/>
</dbReference>
<dbReference type="Pfam" id="PF01121">
    <property type="entry name" value="CoaE"/>
    <property type="match status" value="1"/>
</dbReference>
<dbReference type="SUPFAM" id="SSF52540">
    <property type="entry name" value="P-loop containing nucleoside triphosphate hydrolases"/>
    <property type="match status" value="1"/>
</dbReference>
<dbReference type="PROSITE" id="PS51219">
    <property type="entry name" value="DPCK"/>
    <property type="match status" value="1"/>
</dbReference>
<accession>Q2P5F7</accession>
<evidence type="ECO:0000255" key="1">
    <source>
        <dbReference type="HAMAP-Rule" id="MF_00376"/>
    </source>
</evidence>
<protein>
    <recommendedName>
        <fullName evidence="1">Dephospho-CoA kinase</fullName>
        <ecNumber evidence="1">2.7.1.24</ecNumber>
    </recommendedName>
    <alternativeName>
        <fullName evidence="1">Dephosphocoenzyme A kinase</fullName>
    </alternativeName>
</protein>
<sequence>MSDFIVGLTGGIASGKSALAAEFEKLGVPVVDADLVARQVVAPGPVLDAIVAQFGAEVLLTDGTLDRQTLRQRVFADTAQRRVLEAITHPAIRSELQRAALAALAPYAIVAIPLLTEAGGRAGYPWLDRILVVDVPVALQHQRLMQRDAATAELADRMIAAQATREQRLAIADDVVCNDGVLEQLTQATHRLDADYRARSDR</sequence>
<proteinExistence type="inferred from homology"/>
<comment type="function">
    <text evidence="1">Catalyzes the phosphorylation of the 3'-hydroxyl group of dephosphocoenzyme A to form coenzyme A.</text>
</comment>
<comment type="catalytic activity">
    <reaction evidence="1">
        <text>3'-dephospho-CoA + ATP = ADP + CoA + H(+)</text>
        <dbReference type="Rhea" id="RHEA:18245"/>
        <dbReference type="ChEBI" id="CHEBI:15378"/>
        <dbReference type="ChEBI" id="CHEBI:30616"/>
        <dbReference type="ChEBI" id="CHEBI:57287"/>
        <dbReference type="ChEBI" id="CHEBI:57328"/>
        <dbReference type="ChEBI" id="CHEBI:456216"/>
        <dbReference type="EC" id="2.7.1.24"/>
    </reaction>
</comment>
<comment type="pathway">
    <text evidence="1">Cofactor biosynthesis; coenzyme A biosynthesis; CoA from (R)-pantothenate: step 5/5.</text>
</comment>
<comment type="subcellular location">
    <subcellularLocation>
        <location evidence="1">Cytoplasm</location>
    </subcellularLocation>
</comment>
<comment type="similarity">
    <text evidence="1">Belongs to the CoaE family.</text>
</comment>
<keyword id="KW-0067">ATP-binding</keyword>
<keyword id="KW-0173">Coenzyme A biosynthesis</keyword>
<keyword id="KW-0963">Cytoplasm</keyword>
<keyword id="KW-0418">Kinase</keyword>
<keyword id="KW-0547">Nucleotide-binding</keyword>
<keyword id="KW-0808">Transferase</keyword>
<organism>
    <name type="scientific">Xanthomonas oryzae pv. oryzae (strain MAFF 311018)</name>
    <dbReference type="NCBI Taxonomy" id="342109"/>
    <lineage>
        <taxon>Bacteria</taxon>
        <taxon>Pseudomonadati</taxon>
        <taxon>Pseudomonadota</taxon>
        <taxon>Gammaproteobacteria</taxon>
        <taxon>Lysobacterales</taxon>
        <taxon>Lysobacteraceae</taxon>
        <taxon>Xanthomonas</taxon>
    </lineage>
</organism>
<name>COAE_XANOM</name>